<proteinExistence type="inferred from homology"/>
<protein>
    <recommendedName>
        <fullName evidence="1">NADH-quinone oxidoreductase subunit D</fullName>
        <ecNumber evidence="1">7.1.1.-</ecNumber>
    </recommendedName>
    <alternativeName>
        <fullName evidence="1">NADH dehydrogenase I subunit D</fullName>
    </alternativeName>
    <alternativeName>
        <fullName evidence="1">NDH-1 subunit D</fullName>
    </alternativeName>
</protein>
<organism>
    <name type="scientific">Geobacillus kaustophilus (strain HTA426)</name>
    <dbReference type="NCBI Taxonomy" id="235909"/>
    <lineage>
        <taxon>Bacteria</taxon>
        <taxon>Bacillati</taxon>
        <taxon>Bacillota</taxon>
        <taxon>Bacilli</taxon>
        <taxon>Bacillales</taxon>
        <taxon>Anoxybacillaceae</taxon>
        <taxon>Geobacillus</taxon>
        <taxon>Geobacillus thermoleovorans group</taxon>
    </lineage>
</organism>
<comment type="function">
    <text evidence="1">NDH-1 shuttles electrons from NADH, via FMN and iron-sulfur (Fe-S) centers, to quinones in the respiratory chain. The immediate electron acceptor for the enzyme in this species is believed to be a menaquinone. Couples the redox reaction to proton translocation (for every two electrons transferred, four hydrogen ions are translocated across the cytoplasmic membrane), and thus conserves the redox energy in a proton gradient.</text>
</comment>
<comment type="catalytic activity">
    <reaction evidence="1">
        <text>a quinone + NADH + 5 H(+)(in) = a quinol + NAD(+) + 4 H(+)(out)</text>
        <dbReference type="Rhea" id="RHEA:57888"/>
        <dbReference type="ChEBI" id="CHEBI:15378"/>
        <dbReference type="ChEBI" id="CHEBI:24646"/>
        <dbReference type="ChEBI" id="CHEBI:57540"/>
        <dbReference type="ChEBI" id="CHEBI:57945"/>
        <dbReference type="ChEBI" id="CHEBI:132124"/>
    </reaction>
</comment>
<comment type="subunit">
    <text evidence="1">NDH-1 is composed of 14 different subunits. Subunits NuoB, C, D, E, F, and G constitute the peripheral sector of the complex.</text>
</comment>
<comment type="subcellular location">
    <subcellularLocation>
        <location evidence="1">Cell membrane</location>
        <topology evidence="1">Peripheral membrane protein</topology>
        <orientation evidence="1">Cytoplasmic side</orientation>
    </subcellularLocation>
</comment>
<comment type="similarity">
    <text evidence="1">Belongs to the complex I 49 kDa subunit family.</text>
</comment>
<feature type="chain" id="PRO_0000357819" description="NADH-quinone oxidoreductase subunit D">
    <location>
        <begin position="1"/>
        <end position="367"/>
    </location>
</feature>
<keyword id="KW-1003">Cell membrane</keyword>
<keyword id="KW-0472">Membrane</keyword>
<keyword id="KW-0520">NAD</keyword>
<keyword id="KW-0874">Quinone</keyword>
<keyword id="KW-1185">Reference proteome</keyword>
<keyword id="KW-1278">Translocase</keyword>
<keyword id="KW-0813">Transport</keyword>
<evidence type="ECO:0000255" key="1">
    <source>
        <dbReference type="HAMAP-Rule" id="MF_01358"/>
    </source>
</evidence>
<dbReference type="EC" id="7.1.1.-" evidence="1"/>
<dbReference type="EMBL" id="BA000043">
    <property type="protein sequence ID" value="BAD77638.1"/>
    <property type="molecule type" value="Genomic_DNA"/>
</dbReference>
<dbReference type="SMR" id="Q5KUJ8"/>
<dbReference type="STRING" id="235909.GK3353"/>
<dbReference type="KEGG" id="gka:GK3353"/>
<dbReference type="eggNOG" id="COG0649">
    <property type="taxonomic scope" value="Bacteria"/>
</dbReference>
<dbReference type="HOGENOM" id="CLU_015134_1_2_9"/>
<dbReference type="Proteomes" id="UP000001172">
    <property type="component" value="Chromosome"/>
</dbReference>
<dbReference type="GO" id="GO:0005886">
    <property type="term" value="C:plasma membrane"/>
    <property type="evidence" value="ECO:0007669"/>
    <property type="project" value="UniProtKB-SubCell"/>
</dbReference>
<dbReference type="GO" id="GO:0051287">
    <property type="term" value="F:NAD binding"/>
    <property type="evidence" value="ECO:0007669"/>
    <property type="project" value="InterPro"/>
</dbReference>
<dbReference type="GO" id="GO:0050136">
    <property type="term" value="F:NADH:ubiquinone reductase (non-electrogenic) activity"/>
    <property type="evidence" value="ECO:0007669"/>
    <property type="project" value="UniProtKB-UniRule"/>
</dbReference>
<dbReference type="GO" id="GO:0048038">
    <property type="term" value="F:quinone binding"/>
    <property type="evidence" value="ECO:0007669"/>
    <property type="project" value="UniProtKB-KW"/>
</dbReference>
<dbReference type="Gene3D" id="1.10.645.10">
    <property type="entry name" value="Cytochrome-c3 Hydrogenase, chain B"/>
    <property type="match status" value="1"/>
</dbReference>
<dbReference type="HAMAP" id="MF_01358">
    <property type="entry name" value="NDH1_NuoD"/>
    <property type="match status" value="1"/>
</dbReference>
<dbReference type="InterPro" id="IPR001135">
    <property type="entry name" value="NADH_Q_OxRdtase_suD"/>
</dbReference>
<dbReference type="InterPro" id="IPR022885">
    <property type="entry name" value="NDH1_su_D/H"/>
</dbReference>
<dbReference type="InterPro" id="IPR029014">
    <property type="entry name" value="NiFe-Hase_large"/>
</dbReference>
<dbReference type="NCBIfam" id="NF004739">
    <property type="entry name" value="PRK06075.1"/>
    <property type="match status" value="1"/>
</dbReference>
<dbReference type="NCBIfam" id="NF008974">
    <property type="entry name" value="PRK12322.1"/>
    <property type="match status" value="1"/>
</dbReference>
<dbReference type="PANTHER" id="PTHR11993:SF10">
    <property type="entry name" value="NADH DEHYDROGENASE [UBIQUINONE] IRON-SULFUR PROTEIN 2, MITOCHONDRIAL"/>
    <property type="match status" value="1"/>
</dbReference>
<dbReference type="PANTHER" id="PTHR11993">
    <property type="entry name" value="NADH-UBIQUINONE OXIDOREDUCTASE 49 KDA SUBUNIT"/>
    <property type="match status" value="1"/>
</dbReference>
<dbReference type="Pfam" id="PF00346">
    <property type="entry name" value="Complex1_49kDa"/>
    <property type="match status" value="2"/>
</dbReference>
<dbReference type="SUPFAM" id="SSF56762">
    <property type="entry name" value="HydB/Nqo4-like"/>
    <property type="match status" value="1"/>
</dbReference>
<name>NUOD_GEOKA</name>
<gene>
    <name evidence="1" type="primary">nuoD</name>
    <name type="ordered locus">GK3353</name>
</gene>
<reference key="1">
    <citation type="journal article" date="2004" name="Nucleic Acids Res.">
        <title>Thermoadaptation trait revealed by the genome sequence of thermophilic Geobacillus kaustophilus.</title>
        <authorList>
            <person name="Takami H."/>
            <person name="Takaki Y."/>
            <person name="Chee G.-J."/>
            <person name="Nishi S."/>
            <person name="Shimamura S."/>
            <person name="Suzuki H."/>
            <person name="Matsui S."/>
            <person name="Uchiyama I."/>
        </authorList>
    </citation>
    <scope>NUCLEOTIDE SEQUENCE [LARGE SCALE GENOMIC DNA]</scope>
    <source>
        <strain>HTA426</strain>
    </source>
</reference>
<accession>Q5KUJ8</accession>
<sequence length="367" mass="41948">MMLRTEEMILNVGPQHPSTHGVFRLILKIDGEIIQEATPVIGYLHRGTEKIAEGLQYTQIIPYTDRMDYLSAMTNNYVLCHAVETMMGIEVPERAEYLRVLAMELGRIASHLVWWGTYLLDLGATSPFLYAFREREMIINLLNELSGARLTFNYMRIGGVKWDAPDGWIDKVKQFVPYMREKLHGYHELVTGNEIFRQRVTGVGRYTKEEAISYSLSGVNLRSTGVKWDLRKDEPYSIYDRFDFDVPVREGGDCLARYECRMAEIEQSLRIIEQACEQFPPEGPIMGKVPRIIKAPPGETFVRIEAPRGEIGCYIASDGKKEPYRLKFRRPSFYNLQILPKLLKGENLANVIAILGSIDIVLGEVDG</sequence>